<evidence type="ECO:0000255" key="1">
    <source>
        <dbReference type="HAMAP-Rule" id="MF_00664"/>
    </source>
</evidence>
<sequence length="227" mass="25272">MLCNLIHNIHKEGYIIIMISFLLSCIGFAISCSLGIIFLVASLLCIYFFRDPIRIVPEGDHLIISPADGIILNIEQVNSPIDNSTQVLCISIFLNVLNVHVNRIPVSGTIKATEYIPGRFISASLNKSSELNERQRIVIESNVNHHTIIVDQIAGLIARRIVCNAYEGQNVNSGERFGIIRFGSRVNIYLPLNIHISAFKGQTVIGGETILAYLEDYPHKQLTAKFI</sequence>
<protein>
    <recommendedName>
        <fullName evidence="1">Phosphatidylserine decarboxylase proenzyme</fullName>
        <ecNumber evidence="1">4.1.1.65</ecNumber>
    </recommendedName>
    <component>
        <recommendedName>
            <fullName evidence="1">Phosphatidylserine decarboxylase alpha chain</fullName>
        </recommendedName>
    </component>
    <component>
        <recommendedName>
            <fullName evidence="1">Phosphatidylserine decarboxylase beta chain</fullName>
        </recommendedName>
    </component>
</protein>
<comment type="function">
    <text evidence="1">Catalyzes the formation of phosphatidylethanolamine (PtdEtn) from phosphatidylserine (PtdSer).</text>
</comment>
<comment type="catalytic activity">
    <reaction evidence="1">
        <text>a 1,2-diacyl-sn-glycero-3-phospho-L-serine + H(+) = a 1,2-diacyl-sn-glycero-3-phosphoethanolamine + CO2</text>
        <dbReference type="Rhea" id="RHEA:20828"/>
        <dbReference type="ChEBI" id="CHEBI:15378"/>
        <dbReference type="ChEBI" id="CHEBI:16526"/>
        <dbReference type="ChEBI" id="CHEBI:57262"/>
        <dbReference type="ChEBI" id="CHEBI:64612"/>
        <dbReference type="EC" id="4.1.1.65"/>
    </reaction>
</comment>
<comment type="cofactor">
    <cofactor evidence="1">
        <name>pyruvate</name>
        <dbReference type="ChEBI" id="CHEBI:15361"/>
    </cofactor>
    <text evidence="1">Binds 1 pyruvoyl group covalently per subunit.</text>
</comment>
<comment type="pathway">
    <text evidence="1">Phospholipid metabolism; phosphatidylethanolamine biosynthesis; phosphatidylethanolamine from CDP-diacylglycerol: step 2/2.</text>
</comment>
<comment type="subunit">
    <text evidence="1">Heterodimer of a large membrane-associated beta subunit and a small pyruvoyl-containing alpha subunit.</text>
</comment>
<comment type="subcellular location">
    <subcellularLocation>
        <location evidence="1">Cell membrane</location>
        <topology evidence="1">Peripheral membrane protein</topology>
    </subcellularLocation>
</comment>
<comment type="PTM">
    <text evidence="1">Is synthesized initially as an inactive proenzyme. Formation of the active enzyme involves a self-maturation process in which the active site pyruvoyl group is generated from an internal serine residue via an autocatalytic post-translational modification. Two non-identical subunits are generated from the proenzyme in this reaction, and the pyruvate is formed at the N-terminus of the alpha chain, which is derived from the carboxyl end of the proenzyme. The post-translation cleavage follows an unusual pathway, termed non-hydrolytic serinolysis, in which the side chain hydroxyl group of the serine supplies its oxygen atom to form the C-terminus of the beta chain, while the remainder of the serine residue undergoes an oxidative deamination to produce ammonia and the pyruvoyl prosthetic group on the alpha chain.</text>
</comment>
<comment type="similarity">
    <text evidence="1">Belongs to the phosphatidylserine decarboxylase family. PSD-A subfamily.</text>
</comment>
<feature type="chain" id="PRO_0000262215" description="Phosphatidylserine decarboxylase beta chain" evidence="1">
    <location>
        <begin position="1"/>
        <end position="183"/>
    </location>
</feature>
<feature type="chain" id="PRO_0000262216" description="Phosphatidylserine decarboxylase alpha chain" evidence="1">
    <location>
        <begin position="184"/>
        <end position="227"/>
    </location>
</feature>
<feature type="active site" description="Schiff-base intermediate with substrate; via pyruvic acid" evidence="1">
    <location>
        <position position="184"/>
    </location>
</feature>
<feature type="site" description="Cleavage (non-hydrolytic); by autocatalysis" evidence="1">
    <location>
        <begin position="183"/>
        <end position="184"/>
    </location>
</feature>
<feature type="modified residue" description="Pyruvic acid (Ser); by autocatalysis" evidence="1">
    <location>
        <position position="184"/>
    </location>
</feature>
<gene>
    <name evidence="1" type="primary">psd</name>
    <name type="ordered locus">Erum3170</name>
    <name type="ordered locus">ERWE_CDS_03220</name>
</gene>
<reference key="1">
    <citation type="journal article" date="2005" name="Proc. Natl. Acad. Sci. U.S.A.">
        <title>The genome of the heartwater agent Ehrlichia ruminantium contains multiple tandem repeats of actively variable copy number.</title>
        <authorList>
            <person name="Collins N.E."/>
            <person name="Liebenberg J."/>
            <person name="de Villiers E.P."/>
            <person name="Brayton K.A."/>
            <person name="Louw E."/>
            <person name="Pretorius A."/>
            <person name="Faber F.E."/>
            <person name="van Heerden H."/>
            <person name="Josemans A."/>
            <person name="van Kleef M."/>
            <person name="Steyn H.C."/>
            <person name="van Strijp M.F."/>
            <person name="Zweygarth E."/>
            <person name="Jongejan F."/>
            <person name="Maillard J.C."/>
            <person name="Berthier D."/>
            <person name="Botha M."/>
            <person name="Joubert F."/>
            <person name="Corton C.H."/>
            <person name="Thomson N.R."/>
            <person name="Allsopp M.T."/>
            <person name="Allsopp B.A."/>
        </authorList>
    </citation>
    <scope>NUCLEOTIDE SEQUENCE [LARGE SCALE GENOMIC DNA]</scope>
    <source>
        <strain>Welgevonden</strain>
    </source>
</reference>
<reference key="2">
    <citation type="journal article" date="2006" name="J. Bacteriol.">
        <title>Comparative genomic analysis of three strains of Ehrlichia ruminantium reveals an active process of genome size plasticity.</title>
        <authorList>
            <person name="Frutos R."/>
            <person name="Viari A."/>
            <person name="Ferraz C."/>
            <person name="Morgat A."/>
            <person name="Eychenie S."/>
            <person name="Kandassamy Y."/>
            <person name="Chantal I."/>
            <person name="Bensaid A."/>
            <person name="Coissac E."/>
            <person name="Vachiery N."/>
            <person name="Demaille J."/>
            <person name="Martinez D."/>
        </authorList>
    </citation>
    <scope>NUCLEOTIDE SEQUENCE [LARGE SCALE GENOMIC DNA]</scope>
    <source>
        <strain>Welgevonden</strain>
    </source>
</reference>
<proteinExistence type="inferred from homology"/>
<keyword id="KW-1003">Cell membrane</keyword>
<keyword id="KW-0210">Decarboxylase</keyword>
<keyword id="KW-0444">Lipid biosynthesis</keyword>
<keyword id="KW-0443">Lipid metabolism</keyword>
<keyword id="KW-0456">Lyase</keyword>
<keyword id="KW-0472">Membrane</keyword>
<keyword id="KW-0594">Phospholipid biosynthesis</keyword>
<keyword id="KW-1208">Phospholipid metabolism</keyword>
<keyword id="KW-0670">Pyruvate</keyword>
<keyword id="KW-0865">Zymogen</keyword>
<accession>Q5HBL4</accession>
<accession>Q5FEA6</accession>
<dbReference type="EC" id="4.1.1.65" evidence="1"/>
<dbReference type="EMBL" id="CR767821">
    <property type="protein sequence ID" value="CAH58034.1"/>
    <property type="molecule type" value="Genomic_DNA"/>
</dbReference>
<dbReference type="EMBL" id="CR925678">
    <property type="protein sequence ID" value="CAI26816.1"/>
    <property type="molecule type" value="Genomic_DNA"/>
</dbReference>
<dbReference type="RefSeq" id="WP_011154997.1">
    <property type="nucleotide sequence ID" value="NC_005295.2"/>
</dbReference>
<dbReference type="SMR" id="Q5HBL4"/>
<dbReference type="GeneID" id="33057854"/>
<dbReference type="KEGG" id="eru:Erum3170"/>
<dbReference type="KEGG" id="erw:ERWE_CDS_03220"/>
<dbReference type="eggNOG" id="COG0688">
    <property type="taxonomic scope" value="Bacteria"/>
</dbReference>
<dbReference type="HOGENOM" id="CLU_072492_0_0_5"/>
<dbReference type="UniPathway" id="UPA00558">
    <property type="reaction ID" value="UER00616"/>
</dbReference>
<dbReference type="Proteomes" id="UP000001021">
    <property type="component" value="Chromosome"/>
</dbReference>
<dbReference type="GO" id="GO:0005886">
    <property type="term" value="C:plasma membrane"/>
    <property type="evidence" value="ECO:0007669"/>
    <property type="project" value="UniProtKB-SubCell"/>
</dbReference>
<dbReference type="GO" id="GO:0004609">
    <property type="term" value="F:phosphatidylserine decarboxylase activity"/>
    <property type="evidence" value="ECO:0007669"/>
    <property type="project" value="UniProtKB-UniRule"/>
</dbReference>
<dbReference type="GO" id="GO:0006646">
    <property type="term" value="P:phosphatidylethanolamine biosynthetic process"/>
    <property type="evidence" value="ECO:0007669"/>
    <property type="project" value="UniProtKB-UniRule"/>
</dbReference>
<dbReference type="HAMAP" id="MF_00664">
    <property type="entry name" value="PS_decarb_PSD_A"/>
    <property type="match status" value="1"/>
</dbReference>
<dbReference type="InterPro" id="IPR003817">
    <property type="entry name" value="PS_Dcarbxylase"/>
</dbReference>
<dbReference type="InterPro" id="IPR033175">
    <property type="entry name" value="PSD-A"/>
</dbReference>
<dbReference type="NCBIfam" id="NF003678">
    <property type="entry name" value="PRK05305.1-2"/>
    <property type="match status" value="1"/>
</dbReference>
<dbReference type="NCBIfam" id="NF003684">
    <property type="entry name" value="PRK05305.2-4"/>
    <property type="match status" value="1"/>
</dbReference>
<dbReference type="NCBIfam" id="NF003685">
    <property type="entry name" value="PRK05305.2-5"/>
    <property type="match status" value="1"/>
</dbReference>
<dbReference type="PANTHER" id="PTHR35809">
    <property type="entry name" value="ARCHAETIDYLSERINE DECARBOXYLASE PROENZYME-RELATED"/>
    <property type="match status" value="1"/>
</dbReference>
<dbReference type="PANTHER" id="PTHR35809:SF1">
    <property type="entry name" value="ARCHAETIDYLSERINE DECARBOXYLASE PROENZYME-RELATED"/>
    <property type="match status" value="1"/>
</dbReference>
<dbReference type="Pfam" id="PF02666">
    <property type="entry name" value="PS_Dcarbxylase"/>
    <property type="match status" value="1"/>
</dbReference>
<organism>
    <name type="scientific">Ehrlichia ruminantium (strain Welgevonden)</name>
    <dbReference type="NCBI Taxonomy" id="254945"/>
    <lineage>
        <taxon>Bacteria</taxon>
        <taxon>Pseudomonadati</taxon>
        <taxon>Pseudomonadota</taxon>
        <taxon>Alphaproteobacteria</taxon>
        <taxon>Rickettsiales</taxon>
        <taxon>Anaplasmataceae</taxon>
        <taxon>Ehrlichia</taxon>
    </lineage>
</organism>
<name>PSD_EHRRW</name>